<comment type="function">
    <text evidence="1">Core subunit of the mitochondrial membrane respiratory chain NADH dehydrogenase (Complex I) that is believed to belong to the minimal assembly required for catalysis. Complex I functions in the transfer of electrons from NADH to the respiratory chain. The immediate electron acceptor for the enzyme is believed to be ubiquinone (By similarity).</text>
</comment>
<comment type="catalytic activity">
    <reaction>
        <text>a ubiquinone + NADH + 5 H(+)(in) = a ubiquinol + NAD(+) + 4 H(+)(out)</text>
        <dbReference type="Rhea" id="RHEA:29091"/>
        <dbReference type="Rhea" id="RHEA-COMP:9565"/>
        <dbReference type="Rhea" id="RHEA-COMP:9566"/>
        <dbReference type="ChEBI" id="CHEBI:15378"/>
        <dbReference type="ChEBI" id="CHEBI:16389"/>
        <dbReference type="ChEBI" id="CHEBI:17976"/>
        <dbReference type="ChEBI" id="CHEBI:57540"/>
        <dbReference type="ChEBI" id="CHEBI:57945"/>
        <dbReference type="EC" id="7.1.1.2"/>
    </reaction>
</comment>
<comment type="subcellular location">
    <subcellularLocation>
        <location evidence="1">Mitochondrion inner membrane</location>
        <topology evidence="1">Multi-pass membrane protein</topology>
    </subcellularLocation>
</comment>
<comment type="similarity">
    <text evidence="3">Belongs to the complex I subunit 1 family.</text>
</comment>
<evidence type="ECO:0000250" key="1"/>
<evidence type="ECO:0000255" key="2"/>
<evidence type="ECO:0000305" key="3"/>
<reference key="1">
    <citation type="journal article" date="1992" name="Nucleic Acids Res.">
        <title>The complete nucleotide sequence of the Crossostoma lacustre mitochondrial genome: conservation and variations among vertebrates.</title>
        <authorList>
            <person name="Tzeng C.-S."/>
            <person name="Hui C.-F."/>
            <person name="Shen S.-C."/>
            <person name="Huang P.C."/>
        </authorList>
    </citation>
    <scope>NUCLEOTIDE SEQUENCE [GENOMIC DNA]</scope>
</reference>
<protein>
    <recommendedName>
        <fullName>NADH-ubiquinone oxidoreductase chain 1</fullName>
        <ecNumber>7.1.1.2</ecNumber>
    </recommendedName>
    <alternativeName>
        <fullName>NADH dehydrogenase subunit 1</fullName>
    </alternativeName>
</protein>
<keyword id="KW-0249">Electron transport</keyword>
<keyword id="KW-0472">Membrane</keyword>
<keyword id="KW-0496">Mitochondrion</keyword>
<keyword id="KW-0999">Mitochondrion inner membrane</keyword>
<keyword id="KW-0520">NAD</keyword>
<keyword id="KW-0679">Respiratory chain</keyword>
<keyword id="KW-1278">Translocase</keyword>
<keyword id="KW-0812">Transmembrane</keyword>
<keyword id="KW-1133">Transmembrane helix</keyword>
<keyword id="KW-0813">Transport</keyword>
<keyword id="KW-0830">Ubiquinone</keyword>
<feature type="chain" id="PRO_0000117374" description="NADH-ubiquinone oxidoreductase chain 1">
    <location>
        <begin position="1"/>
        <end position="324"/>
    </location>
</feature>
<feature type="transmembrane region" description="Helical" evidence="2">
    <location>
        <begin position="9"/>
        <end position="29"/>
    </location>
</feature>
<feature type="transmembrane region" description="Helical" evidence="2">
    <location>
        <begin position="76"/>
        <end position="96"/>
    </location>
</feature>
<feature type="transmembrane region" description="Helical" evidence="2">
    <location>
        <begin position="106"/>
        <end position="126"/>
    </location>
</feature>
<feature type="transmembrane region" description="Helical" evidence="2">
    <location>
        <begin position="146"/>
        <end position="166"/>
    </location>
</feature>
<feature type="transmembrane region" description="Helical" evidence="2">
    <location>
        <begin position="177"/>
        <end position="197"/>
    </location>
</feature>
<feature type="transmembrane region" description="Helical" evidence="2">
    <location>
        <begin position="228"/>
        <end position="248"/>
    </location>
</feature>
<feature type="transmembrane region" description="Helical" evidence="2">
    <location>
        <begin position="259"/>
        <end position="279"/>
    </location>
</feature>
<feature type="transmembrane region" description="Helical" evidence="2">
    <location>
        <begin position="299"/>
        <end position="319"/>
    </location>
</feature>
<accession>P34186</accession>
<dbReference type="EC" id="7.1.1.2"/>
<dbReference type="EMBL" id="M91245">
    <property type="protein sequence ID" value="AAB96811.1"/>
    <property type="molecule type" value="Genomic_DNA"/>
</dbReference>
<dbReference type="PIR" id="S35462">
    <property type="entry name" value="S35462"/>
</dbReference>
<dbReference type="RefSeq" id="NP_008303.1">
    <property type="nucleotide sequence ID" value="NC_001727.1"/>
</dbReference>
<dbReference type="SMR" id="P34186"/>
<dbReference type="GeneID" id="807985"/>
<dbReference type="CTD" id="4535"/>
<dbReference type="GO" id="GO:0005743">
    <property type="term" value="C:mitochondrial inner membrane"/>
    <property type="evidence" value="ECO:0007669"/>
    <property type="project" value="UniProtKB-SubCell"/>
</dbReference>
<dbReference type="GO" id="GO:0008137">
    <property type="term" value="F:NADH dehydrogenase (ubiquinone) activity"/>
    <property type="evidence" value="ECO:0007669"/>
    <property type="project" value="UniProtKB-EC"/>
</dbReference>
<dbReference type="GO" id="GO:0009060">
    <property type="term" value="P:aerobic respiration"/>
    <property type="evidence" value="ECO:0007669"/>
    <property type="project" value="TreeGrafter"/>
</dbReference>
<dbReference type="HAMAP" id="MF_01350">
    <property type="entry name" value="NDH1_NuoH"/>
    <property type="match status" value="1"/>
</dbReference>
<dbReference type="InterPro" id="IPR001694">
    <property type="entry name" value="NADH_UbQ_OxRdtase_su1/FPO"/>
</dbReference>
<dbReference type="InterPro" id="IPR018086">
    <property type="entry name" value="NADH_UbQ_OxRdtase_su1_CS"/>
</dbReference>
<dbReference type="PANTHER" id="PTHR11432">
    <property type="entry name" value="NADH DEHYDROGENASE SUBUNIT 1"/>
    <property type="match status" value="1"/>
</dbReference>
<dbReference type="PANTHER" id="PTHR11432:SF3">
    <property type="entry name" value="NADH-UBIQUINONE OXIDOREDUCTASE CHAIN 1"/>
    <property type="match status" value="1"/>
</dbReference>
<dbReference type="Pfam" id="PF00146">
    <property type="entry name" value="NADHdh"/>
    <property type="match status" value="1"/>
</dbReference>
<dbReference type="PROSITE" id="PS00667">
    <property type="entry name" value="COMPLEX1_ND1_1"/>
    <property type="match status" value="1"/>
</dbReference>
<dbReference type="PROSITE" id="PS00668">
    <property type="entry name" value="COMPLEX1_ND1_2"/>
    <property type="match status" value="1"/>
</dbReference>
<name>NU1M_FORLA</name>
<gene>
    <name type="primary">MT-ND1</name>
    <name type="synonym">MTND1</name>
    <name type="synonym">NADH1</name>
    <name type="synonym">ND1</name>
</gene>
<organism>
    <name type="scientific">Formosania lacustris</name>
    <name type="common">Oriental stream loach</name>
    <name type="synonym">Crossostoma lacustre</name>
    <dbReference type="NCBI Taxonomy" id="7980"/>
    <lineage>
        <taxon>Eukaryota</taxon>
        <taxon>Metazoa</taxon>
        <taxon>Chordata</taxon>
        <taxon>Craniata</taxon>
        <taxon>Vertebrata</taxon>
        <taxon>Euteleostomi</taxon>
        <taxon>Actinopterygii</taxon>
        <taxon>Neopterygii</taxon>
        <taxon>Teleostei</taxon>
        <taxon>Ostariophysi</taxon>
        <taxon>Cypriniformes</taxon>
        <taxon>Gastromyzontidae</taxon>
        <taxon>Formosania</taxon>
    </lineage>
</organism>
<geneLocation type="mitochondrion"/>
<sequence>MLNTLLTHLINPLAYIVPVLLAVAFLTLLERKVLGYMQLRKGPNIVGPYGLLQPIADGVKLFIKEPIRPSTASPTLFLVTPMLALTLAMTLWAPMPMPHPIIDLNLGVLFILALSSLAVYSILGSGWASNSKYALIGALRAVAQTISYEVSLGLILRSIIIFWGGYTVQTFNTTQEALWLLLPACPLAAMWYISTLAETNRAPFDLTEGESELAPGFNVEYAGGPFALLFLAEYANILLMNTLSAILFLGASHMPAIPELTTINLMTKAALLSVVFLWVRASYPRFRYDQLMHLVWKNFLPLTLALVLWHTALPIAFAGLPPQL</sequence>
<proteinExistence type="inferred from homology"/>